<reference key="1">
    <citation type="journal article" date="2000" name="Science">
        <title>Complete genome sequence of Neisseria meningitidis serogroup B strain MC58.</title>
        <authorList>
            <person name="Tettelin H."/>
            <person name="Saunders N.J."/>
            <person name="Heidelberg J.F."/>
            <person name="Jeffries A.C."/>
            <person name="Nelson K.E."/>
            <person name="Eisen J.A."/>
            <person name="Ketchum K.A."/>
            <person name="Hood D.W."/>
            <person name="Peden J.F."/>
            <person name="Dodson R.J."/>
            <person name="Nelson W.C."/>
            <person name="Gwinn M.L."/>
            <person name="DeBoy R.T."/>
            <person name="Peterson J.D."/>
            <person name="Hickey E.K."/>
            <person name="Haft D.H."/>
            <person name="Salzberg S.L."/>
            <person name="White O."/>
            <person name="Fleischmann R.D."/>
            <person name="Dougherty B.A."/>
            <person name="Mason T.M."/>
            <person name="Ciecko A."/>
            <person name="Parksey D.S."/>
            <person name="Blair E."/>
            <person name="Cittone H."/>
            <person name="Clark E.B."/>
            <person name="Cotton M.D."/>
            <person name="Utterback T.R."/>
            <person name="Khouri H.M."/>
            <person name="Qin H."/>
            <person name="Vamathevan J.J."/>
            <person name="Gill J."/>
            <person name="Scarlato V."/>
            <person name="Masignani V."/>
            <person name="Pizza M."/>
            <person name="Grandi G."/>
            <person name="Sun L."/>
            <person name="Smith H.O."/>
            <person name="Fraser C.M."/>
            <person name="Moxon E.R."/>
            <person name="Rappuoli R."/>
            <person name="Venter J.C."/>
        </authorList>
    </citation>
    <scope>NUCLEOTIDE SEQUENCE [LARGE SCALE GENOMIC DNA]</scope>
    <source>
        <strain>ATCC BAA-335 / MC58</strain>
    </source>
</reference>
<sequence>MSHISPIPEILADIKAGKMVIITDAEDRENEGDLLMAAQFVTPEAINFMIKHARGLVCLPMDGEMVEKLGLPMMTQKNGAQYGTNFTVSIEAAHGITTGISAADRALTIQTAVSPTAKPEDIVQPGHIFPLRAQKGGVLVRAGHTEAGVDLAQMNGLIPASVICEIINDDGTMARMPELMKFAEEHKLKIGTIADLIEYRSRTESLLEDMGNAPVQTPWGEFQQHVYVDKLSGETHLALVKGTPAADTETLVRVHEPFSVMDFIQANPRHSWSLPKALEHIQQAESGVVILLHRTEDGASLLDRTLPKGANQAYKWDSKSYGIGAQILAGLNVKKLRVLGQPSSFTGLTGFGLEVVGFEEAEK</sequence>
<accession>Q9JZ77</accession>
<organism>
    <name type="scientific">Neisseria meningitidis serogroup B (strain ATCC BAA-335 / MC58)</name>
    <dbReference type="NCBI Taxonomy" id="122586"/>
    <lineage>
        <taxon>Bacteria</taxon>
        <taxon>Pseudomonadati</taxon>
        <taxon>Pseudomonadota</taxon>
        <taxon>Betaproteobacteria</taxon>
        <taxon>Neisseriales</taxon>
        <taxon>Neisseriaceae</taxon>
        <taxon>Neisseria</taxon>
    </lineage>
</organism>
<name>RIBB_NEIMB</name>
<gene>
    <name type="primary">ribB</name>
    <name type="ordered locus">NMB1256</name>
</gene>
<proteinExistence type="inferred from homology"/>
<dbReference type="EC" id="4.1.99.12"/>
<dbReference type="EMBL" id="AE002098">
    <property type="protein sequence ID" value="AAF41635.1"/>
    <property type="molecule type" value="Genomic_DNA"/>
</dbReference>
<dbReference type="PIR" id="H81104">
    <property type="entry name" value="H81104"/>
</dbReference>
<dbReference type="RefSeq" id="NP_274278.1">
    <property type="nucleotide sequence ID" value="NC_003112.2"/>
</dbReference>
<dbReference type="SMR" id="Q9JZ77"/>
<dbReference type="FunCoup" id="Q9JZ77">
    <property type="interactions" value="355"/>
</dbReference>
<dbReference type="STRING" id="122586.NMB1256"/>
<dbReference type="PaxDb" id="122586-NMB1256"/>
<dbReference type="KEGG" id="nme:NMB1256"/>
<dbReference type="PATRIC" id="fig|122586.8.peg.1572"/>
<dbReference type="HOGENOM" id="CLU_020273_1_2_4"/>
<dbReference type="InParanoid" id="Q9JZ77"/>
<dbReference type="OrthoDB" id="9793111at2"/>
<dbReference type="UniPathway" id="UPA00275">
    <property type="reaction ID" value="UER00399"/>
</dbReference>
<dbReference type="Proteomes" id="UP000000425">
    <property type="component" value="Chromosome"/>
</dbReference>
<dbReference type="GO" id="GO:0005829">
    <property type="term" value="C:cytosol"/>
    <property type="evidence" value="ECO:0000318"/>
    <property type="project" value="GO_Central"/>
</dbReference>
<dbReference type="GO" id="GO:0008686">
    <property type="term" value="F:3,4-dihydroxy-2-butanone-4-phosphate synthase activity"/>
    <property type="evidence" value="ECO:0007669"/>
    <property type="project" value="UniProtKB-UniRule"/>
</dbReference>
<dbReference type="GO" id="GO:0003935">
    <property type="term" value="F:GTP cyclohydrolase II activity"/>
    <property type="evidence" value="ECO:0000318"/>
    <property type="project" value="GO_Central"/>
</dbReference>
<dbReference type="GO" id="GO:0000287">
    <property type="term" value="F:magnesium ion binding"/>
    <property type="evidence" value="ECO:0007669"/>
    <property type="project" value="UniProtKB-UniRule"/>
</dbReference>
<dbReference type="GO" id="GO:0030145">
    <property type="term" value="F:manganese ion binding"/>
    <property type="evidence" value="ECO:0007669"/>
    <property type="project" value="UniProtKB-UniRule"/>
</dbReference>
<dbReference type="GO" id="GO:0009231">
    <property type="term" value="P:riboflavin biosynthetic process"/>
    <property type="evidence" value="ECO:0000318"/>
    <property type="project" value="GO_Central"/>
</dbReference>
<dbReference type="FunFam" id="3.40.50.10990:FF:000007">
    <property type="entry name" value="3,4-dihydroxy-2-butanone 4-phosphate synthase"/>
    <property type="match status" value="1"/>
</dbReference>
<dbReference type="FunFam" id="3.90.870.10:FF:000001">
    <property type="entry name" value="Riboflavin biosynthesis protein RibBA"/>
    <property type="match status" value="1"/>
</dbReference>
<dbReference type="Gene3D" id="3.90.870.10">
    <property type="entry name" value="DHBP synthase"/>
    <property type="match status" value="1"/>
</dbReference>
<dbReference type="Gene3D" id="3.40.50.10990">
    <property type="entry name" value="GTP cyclohydrolase II"/>
    <property type="match status" value="1"/>
</dbReference>
<dbReference type="HAMAP" id="MF_00180">
    <property type="entry name" value="RibB"/>
    <property type="match status" value="1"/>
</dbReference>
<dbReference type="InterPro" id="IPR017945">
    <property type="entry name" value="DHBP_synth_RibB-like_a/b_dom"/>
</dbReference>
<dbReference type="InterPro" id="IPR000422">
    <property type="entry name" value="DHBP_synthase_RibB"/>
</dbReference>
<dbReference type="InterPro" id="IPR032677">
    <property type="entry name" value="GTP_cyclohydro_II"/>
</dbReference>
<dbReference type="InterPro" id="IPR036144">
    <property type="entry name" value="RibA-like_sf"/>
</dbReference>
<dbReference type="NCBIfam" id="NF010626">
    <property type="entry name" value="PRK14019.1"/>
    <property type="match status" value="1"/>
</dbReference>
<dbReference type="NCBIfam" id="TIGR00506">
    <property type="entry name" value="ribB"/>
    <property type="match status" value="1"/>
</dbReference>
<dbReference type="PANTHER" id="PTHR21327:SF34">
    <property type="entry name" value="3,4-DIHYDROXY-2-BUTANONE 4-PHOSPHATE SYNTHASE"/>
    <property type="match status" value="1"/>
</dbReference>
<dbReference type="PANTHER" id="PTHR21327">
    <property type="entry name" value="GTP CYCLOHYDROLASE II-RELATED"/>
    <property type="match status" value="1"/>
</dbReference>
<dbReference type="Pfam" id="PF00926">
    <property type="entry name" value="DHBP_synthase"/>
    <property type="match status" value="1"/>
</dbReference>
<dbReference type="Pfam" id="PF00925">
    <property type="entry name" value="GTP_cyclohydro2"/>
    <property type="match status" value="1"/>
</dbReference>
<dbReference type="PIRSF" id="PIRSF001259">
    <property type="entry name" value="RibA"/>
    <property type="match status" value="1"/>
</dbReference>
<dbReference type="SUPFAM" id="SSF142695">
    <property type="entry name" value="RibA-like"/>
    <property type="match status" value="1"/>
</dbReference>
<dbReference type="SUPFAM" id="SSF55821">
    <property type="entry name" value="YrdC/RibB"/>
    <property type="match status" value="1"/>
</dbReference>
<protein>
    <recommendedName>
        <fullName>3,4-dihydroxy-2-butanone 4-phosphate synthase</fullName>
        <shortName>DHBP synthase</shortName>
        <ecNumber>4.1.99.12</ecNumber>
    </recommendedName>
</protein>
<feature type="chain" id="PRO_0000151730" description="3,4-dihydroxy-2-butanone 4-phosphate synthase">
    <location>
        <begin position="1"/>
        <end position="363"/>
    </location>
</feature>
<feature type="region of interest" description="DHBP synthase">
    <location>
        <begin position="1"/>
        <end position="202"/>
    </location>
</feature>
<feature type="region of interest" description="GTP cyclohydrolase II-like">
    <location>
        <begin position="205"/>
        <end position="363"/>
    </location>
</feature>
<feature type="binding site" evidence="1">
    <location>
        <begin position="28"/>
        <end position="29"/>
    </location>
    <ligand>
        <name>D-ribulose 5-phosphate</name>
        <dbReference type="ChEBI" id="CHEBI:58121"/>
    </ligand>
</feature>
<feature type="binding site" evidence="1">
    <location>
        <position position="29"/>
    </location>
    <ligand>
        <name>Mg(2+)</name>
        <dbReference type="ChEBI" id="CHEBI:18420"/>
        <label>1</label>
    </ligand>
</feature>
<feature type="binding site" evidence="1">
    <location>
        <position position="29"/>
    </location>
    <ligand>
        <name>Mg(2+)</name>
        <dbReference type="ChEBI" id="CHEBI:18420"/>
        <label>2</label>
    </ligand>
</feature>
<feature type="binding site" evidence="1">
    <location>
        <position position="33"/>
    </location>
    <ligand>
        <name>D-ribulose 5-phosphate</name>
        <dbReference type="ChEBI" id="CHEBI:58121"/>
    </ligand>
</feature>
<feature type="binding site" evidence="1">
    <location>
        <begin position="141"/>
        <end position="145"/>
    </location>
    <ligand>
        <name>D-ribulose 5-phosphate</name>
        <dbReference type="ChEBI" id="CHEBI:58121"/>
    </ligand>
</feature>
<feature type="binding site" evidence="1">
    <location>
        <position position="144"/>
    </location>
    <ligand>
        <name>Mg(2+)</name>
        <dbReference type="ChEBI" id="CHEBI:18420"/>
        <label>2</label>
    </ligand>
</feature>
<feature type="binding site" evidence="1">
    <location>
        <position position="165"/>
    </location>
    <ligand>
        <name>D-ribulose 5-phosphate</name>
        <dbReference type="ChEBI" id="CHEBI:58121"/>
    </ligand>
</feature>
<feature type="site" description="Essential for catalytic activity" evidence="1">
    <location>
        <position position="127"/>
    </location>
</feature>
<feature type="site" description="Essential for catalytic activity" evidence="1">
    <location>
        <position position="165"/>
    </location>
</feature>
<evidence type="ECO:0000250" key="1"/>
<evidence type="ECO:0000305" key="2"/>
<keyword id="KW-0456">Lyase</keyword>
<keyword id="KW-0460">Magnesium</keyword>
<keyword id="KW-0464">Manganese</keyword>
<keyword id="KW-0479">Metal-binding</keyword>
<keyword id="KW-1185">Reference proteome</keyword>
<keyword id="KW-0686">Riboflavin biosynthesis</keyword>
<comment type="function">
    <text evidence="1">Catalyzes the conversion of D-ribulose 5-phosphate to formate and 3,4-dihydroxy-2-butanone 4-phosphate.</text>
</comment>
<comment type="catalytic activity">
    <reaction>
        <text>D-ribulose 5-phosphate = (2S)-2-hydroxy-3-oxobutyl phosphate + formate + H(+)</text>
        <dbReference type="Rhea" id="RHEA:18457"/>
        <dbReference type="ChEBI" id="CHEBI:15378"/>
        <dbReference type="ChEBI" id="CHEBI:15740"/>
        <dbReference type="ChEBI" id="CHEBI:58121"/>
        <dbReference type="ChEBI" id="CHEBI:58830"/>
        <dbReference type="EC" id="4.1.99.12"/>
    </reaction>
</comment>
<comment type="cofactor">
    <cofactor evidence="1">
        <name>Mg(2+)</name>
        <dbReference type="ChEBI" id="CHEBI:18420"/>
    </cofactor>
    <cofactor evidence="1">
        <name>Mn(2+)</name>
        <dbReference type="ChEBI" id="CHEBI:29035"/>
    </cofactor>
    <text evidence="1">Binds 2 divalent metal cations per subunit. Magnesium or manganese.</text>
</comment>
<comment type="pathway">
    <text>Cofactor biosynthesis; riboflavin biosynthesis; 2-hydroxy-3-oxobutyl phosphate from D-ribulose 5-phosphate: step 1/1.</text>
</comment>
<comment type="similarity">
    <text evidence="2">In the N-terminal section; belongs to the DHBP synthase family.</text>
</comment>
<comment type="similarity">
    <text evidence="2">In the C-terminal section; belongs to the GTP cyclohydrolase II family.</text>
</comment>